<organism>
    <name type="scientific">Pan paniscus</name>
    <name type="common">Pygmy chimpanzee</name>
    <name type="synonym">Bonobo</name>
    <dbReference type="NCBI Taxonomy" id="9597"/>
    <lineage>
        <taxon>Eukaryota</taxon>
        <taxon>Metazoa</taxon>
        <taxon>Chordata</taxon>
        <taxon>Craniata</taxon>
        <taxon>Vertebrata</taxon>
        <taxon>Euteleostomi</taxon>
        <taxon>Mammalia</taxon>
        <taxon>Eutheria</taxon>
        <taxon>Euarchontoglires</taxon>
        <taxon>Primates</taxon>
        <taxon>Haplorrhini</taxon>
        <taxon>Catarrhini</taxon>
        <taxon>Hominidae</taxon>
        <taxon>Pan</taxon>
    </lineage>
</organism>
<accession>Q9N1A6</accession>
<comment type="function">
    <text evidence="2">Plays a key role in the replacement of histones to protamine in the elongating spermatids of mammals. In condensing spermatids, loaded onto the nucleosomes, where it promotes the recruitment and processing of protamines, which are responsible for histone eviction.</text>
</comment>
<comment type="subcellular location">
    <subcellularLocation>
        <location evidence="1">Nucleus</location>
    </subcellularLocation>
    <subcellularLocation>
        <location evidence="1">Nucleus</location>
        <location evidence="1">Nucleolus</location>
    </subcellularLocation>
    <subcellularLocation>
        <location evidence="1">Chromosome</location>
    </subcellularLocation>
    <text evidence="1 2">Loaded onto the nucleosomes of condensing spermatids (By similarity). Nuclear import is mediated by IPO4. Nucleolar localization requires the protein to be phosphorylated (By similarity).</text>
</comment>
<comment type="tissue specificity">
    <text>Testis.</text>
</comment>
<comment type="similarity">
    <text evidence="4">Belongs to the nuclear transition protein 2 family.</text>
</comment>
<name>STP2_PANPA</name>
<keyword id="KW-0158">Chromosome</keyword>
<keyword id="KW-0217">Developmental protein</keyword>
<keyword id="KW-0221">Differentiation</keyword>
<keyword id="KW-0238">DNA-binding</keyword>
<keyword id="KW-0479">Metal-binding</keyword>
<keyword id="KW-0544">Nucleosome core</keyword>
<keyword id="KW-0539">Nucleus</keyword>
<keyword id="KW-0597">Phosphoprotein</keyword>
<keyword id="KW-1185">Reference proteome</keyword>
<keyword id="KW-0744">Spermatogenesis</keyword>
<keyword id="KW-0862">Zinc</keyword>
<proteinExistence type="evidence at transcript level"/>
<reference key="1">
    <citation type="journal article" date="2000" name="Nature">
        <title>Rapid evolution of male reproductive genes in the descent of man.</title>
        <authorList>
            <person name="Wyckoff G.J."/>
            <person name="Wang W."/>
            <person name="Wu C.-I."/>
        </authorList>
    </citation>
    <scope>NUCLEOTIDE SEQUENCE [GENOMIC DNA]</scope>
</reference>
<evidence type="ECO:0000250" key="1">
    <source>
        <dbReference type="UniProtKB" id="P11101"/>
    </source>
</evidence>
<evidence type="ECO:0000250" key="2">
    <source>
        <dbReference type="UniProtKB" id="P11378"/>
    </source>
</evidence>
<evidence type="ECO:0000256" key="3">
    <source>
        <dbReference type="SAM" id="MobiDB-lite"/>
    </source>
</evidence>
<evidence type="ECO:0000305" key="4"/>
<protein>
    <recommendedName>
        <fullName>Nuclear transition protein 2</fullName>
        <shortName>TP-2</shortName>
        <shortName>TP2</shortName>
    </recommendedName>
</protein>
<feature type="chain" id="PRO_0000191429" description="Nuclear transition protein 2">
    <location>
        <begin position="1"/>
        <end position="133" status="greater than"/>
    </location>
</feature>
<feature type="region of interest" description="Disordered" evidence="3">
    <location>
        <begin position="1"/>
        <end position="133"/>
    </location>
</feature>
<feature type="short sequence motif" description="Nuclear localization signal" evidence="1">
    <location>
        <begin position="110"/>
        <end position="118"/>
    </location>
</feature>
<feature type="compositionally biased region" description="Polar residues" evidence="3">
    <location>
        <begin position="1"/>
        <end position="26"/>
    </location>
</feature>
<feature type="compositionally biased region" description="Low complexity" evidence="3">
    <location>
        <begin position="46"/>
        <end position="72"/>
    </location>
</feature>
<feature type="compositionally biased region" description="Polar residues" evidence="3">
    <location>
        <begin position="124"/>
        <end position="133"/>
    </location>
</feature>
<feature type="binding site" evidence="1">
    <location>
        <position position="12"/>
    </location>
    <ligand>
        <name>Zn(2+)</name>
        <dbReference type="ChEBI" id="CHEBI:29105"/>
    </ligand>
</feature>
<feature type="binding site" evidence="1">
    <location>
        <position position="16"/>
    </location>
    <ligand>
        <name>Zn(2+)</name>
        <dbReference type="ChEBI" id="CHEBI:29105"/>
    </ligand>
</feature>
<feature type="binding site" evidence="1">
    <location>
        <position position="24"/>
    </location>
    <ligand>
        <name>Zn(2+)</name>
        <dbReference type="ChEBI" id="CHEBI:29105"/>
    </ligand>
</feature>
<feature type="binding site" evidence="1">
    <location>
        <position position="26"/>
    </location>
    <ligand>
        <name>Zn(2+)</name>
        <dbReference type="ChEBI" id="CHEBI:29105"/>
    </ligand>
</feature>
<feature type="modified residue" description="Phosphoserine" evidence="1">
    <location>
        <position position="132"/>
    </location>
</feature>
<feature type="non-terminal residue">
    <location>
        <position position="133"/>
    </location>
</feature>
<dbReference type="EMBL" id="AF215717">
    <property type="protein sequence ID" value="AAF35856.1"/>
    <property type="molecule type" value="Genomic_DNA"/>
</dbReference>
<dbReference type="STRING" id="9597.ENSPPAP00000039854"/>
<dbReference type="eggNOG" id="KOG4566">
    <property type="taxonomic scope" value="Eukaryota"/>
</dbReference>
<dbReference type="Proteomes" id="UP000240080">
    <property type="component" value="Unplaced"/>
</dbReference>
<dbReference type="GO" id="GO:0005730">
    <property type="term" value="C:nucleolus"/>
    <property type="evidence" value="ECO:0007669"/>
    <property type="project" value="UniProtKB-SubCell"/>
</dbReference>
<dbReference type="GO" id="GO:0000786">
    <property type="term" value="C:nucleosome"/>
    <property type="evidence" value="ECO:0000250"/>
    <property type="project" value="UniProtKB"/>
</dbReference>
<dbReference type="GO" id="GO:0003677">
    <property type="term" value="F:DNA binding"/>
    <property type="evidence" value="ECO:0007669"/>
    <property type="project" value="UniProtKB-KW"/>
</dbReference>
<dbReference type="GO" id="GO:0008270">
    <property type="term" value="F:zinc ion binding"/>
    <property type="evidence" value="ECO:0007669"/>
    <property type="project" value="TreeGrafter"/>
</dbReference>
<dbReference type="GO" id="GO:0007340">
    <property type="term" value="P:acrosome reaction"/>
    <property type="evidence" value="ECO:0007669"/>
    <property type="project" value="TreeGrafter"/>
</dbReference>
<dbReference type="GO" id="GO:0007341">
    <property type="term" value="P:penetration of zona pellucida"/>
    <property type="evidence" value="ECO:0007669"/>
    <property type="project" value="TreeGrafter"/>
</dbReference>
<dbReference type="GO" id="GO:0010954">
    <property type="term" value="P:positive regulation of protein processing"/>
    <property type="evidence" value="ECO:0000250"/>
    <property type="project" value="UniProtKB"/>
</dbReference>
<dbReference type="GO" id="GO:0035092">
    <property type="term" value="P:sperm DNA condensation"/>
    <property type="evidence" value="ECO:0000250"/>
    <property type="project" value="UniProtKB"/>
</dbReference>
<dbReference type="InterPro" id="IPR000678">
    <property type="entry name" value="TP2"/>
</dbReference>
<dbReference type="PANTHER" id="PTHR17488">
    <property type="entry name" value="NUCLEAR TRANSITION PROTEIN 2"/>
    <property type="match status" value="1"/>
</dbReference>
<dbReference type="PANTHER" id="PTHR17488:SF0">
    <property type="entry name" value="NUCLEAR TRANSITION PROTEIN 2"/>
    <property type="match status" value="1"/>
</dbReference>
<dbReference type="Pfam" id="PF01254">
    <property type="entry name" value="TP2"/>
    <property type="match status" value="1"/>
</dbReference>
<dbReference type="PROSITE" id="PS00970">
    <property type="entry name" value="TP2_1"/>
    <property type="match status" value="1"/>
</dbReference>
<sequence>MDTKTHSLPITHTQLHSNSQPQSCTCTHHRQTFSQSCRQSHRGSRSRSSSQSPASHRNPTGAHSSSGHQSQSPNTSPPPKRHKKTMNSHHSPMRPTLHCSCPKNRKNLEGKLKTKKMAKRIQQVYKTKTRSSG</sequence>
<gene>
    <name type="primary">TNP2</name>
</gene>